<comment type="subcellular location">
    <subcellularLocation>
        <location evidence="1">Bacterial flagellum basal body</location>
    </subcellularLocation>
</comment>
<comment type="similarity">
    <text evidence="1">Belongs to the FliE family.</text>
</comment>
<organism>
    <name type="scientific">Sodalis glossinidius (strain morsitans)</name>
    <dbReference type="NCBI Taxonomy" id="343509"/>
    <lineage>
        <taxon>Bacteria</taxon>
        <taxon>Pseudomonadati</taxon>
        <taxon>Pseudomonadota</taxon>
        <taxon>Gammaproteobacteria</taxon>
        <taxon>Enterobacterales</taxon>
        <taxon>Bruguierivoracaceae</taxon>
        <taxon>Sodalis</taxon>
    </lineage>
</organism>
<evidence type="ECO:0000255" key="1">
    <source>
        <dbReference type="HAMAP-Rule" id="MF_00724"/>
    </source>
</evidence>
<reference key="1">
    <citation type="journal article" date="2006" name="Genome Res.">
        <title>Massive genome erosion and functional adaptations provide insights into the symbiotic lifestyle of Sodalis glossinidius in the tsetse host.</title>
        <authorList>
            <person name="Toh H."/>
            <person name="Weiss B.L."/>
            <person name="Perkin S.A.H."/>
            <person name="Yamashita A."/>
            <person name="Oshima K."/>
            <person name="Hattori M."/>
            <person name="Aksoy S."/>
        </authorList>
    </citation>
    <scope>NUCLEOTIDE SEQUENCE [LARGE SCALE GENOMIC DNA]</scope>
    <source>
        <strain>morsitans</strain>
    </source>
</reference>
<keyword id="KW-0975">Bacterial flagellum</keyword>
<dbReference type="EMBL" id="AP008232">
    <property type="protein sequence ID" value="BAE73329.1"/>
    <property type="molecule type" value="Genomic_DNA"/>
</dbReference>
<dbReference type="RefSeq" id="WP_011409919.1">
    <property type="nucleotide sequence ID" value="NC_007712.1"/>
</dbReference>
<dbReference type="SMR" id="Q2NWZ6"/>
<dbReference type="STRING" id="343509.SG0054"/>
<dbReference type="KEGG" id="sgl:SG0054"/>
<dbReference type="eggNOG" id="COG1677">
    <property type="taxonomic scope" value="Bacteria"/>
</dbReference>
<dbReference type="HOGENOM" id="CLU_147249_0_2_6"/>
<dbReference type="OrthoDB" id="8909229at2"/>
<dbReference type="Proteomes" id="UP000001932">
    <property type="component" value="Chromosome"/>
</dbReference>
<dbReference type="GO" id="GO:0009425">
    <property type="term" value="C:bacterial-type flagellum basal body"/>
    <property type="evidence" value="ECO:0007669"/>
    <property type="project" value="UniProtKB-SubCell"/>
</dbReference>
<dbReference type="GO" id="GO:0003774">
    <property type="term" value="F:cytoskeletal motor activity"/>
    <property type="evidence" value="ECO:0007669"/>
    <property type="project" value="InterPro"/>
</dbReference>
<dbReference type="GO" id="GO:0005198">
    <property type="term" value="F:structural molecule activity"/>
    <property type="evidence" value="ECO:0007669"/>
    <property type="project" value="InterPro"/>
</dbReference>
<dbReference type="GO" id="GO:0071973">
    <property type="term" value="P:bacterial-type flagellum-dependent cell motility"/>
    <property type="evidence" value="ECO:0007669"/>
    <property type="project" value="InterPro"/>
</dbReference>
<dbReference type="HAMAP" id="MF_00724">
    <property type="entry name" value="FliE"/>
    <property type="match status" value="1"/>
</dbReference>
<dbReference type="InterPro" id="IPR001624">
    <property type="entry name" value="FliE"/>
</dbReference>
<dbReference type="NCBIfam" id="TIGR00205">
    <property type="entry name" value="fliE"/>
    <property type="match status" value="1"/>
</dbReference>
<dbReference type="PANTHER" id="PTHR34653">
    <property type="match status" value="1"/>
</dbReference>
<dbReference type="PANTHER" id="PTHR34653:SF1">
    <property type="entry name" value="FLAGELLAR HOOK-BASAL BODY COMPLEX PROTEIN FLIE"/>
    <property type="match status" value="1"/>
</dbReference>
<dbReference type="Pfam" id="PF02049">
    <property type="entry name" value="FliE"/>
    <property type="match status" value="1"/>
</dbReference>
<dbReference type="PRINTS" id="PR01006">
    <property type="entry name" value="FLGHOOKFLIE"/>
</dbReference>
<sequence>MTTQAIHSVLAMMNITAEQAAGNTLTLSAPATAGAGFMSELNSSIKQINGMQIEARRKAEKFELGVPGIALNDVMVDMQKASLALHLGIQVNNKLINAYQEVMNMAV</sequence>
<accession>Q2NWZ6</accession>
<feature type="chain" id="PRO_1000045880" description="Flagellar hook-basal body complex protein FliE">
    <location>
        <begin position="1"/>
        <end position="107"/>
    </location>
</feature>
<proteinExistence type="inferred from homology"/>
<protein>
    <recommendedName>
        <fullName evidence="1">Flagellar hook-basal body complex protein FliE</fullName>
    </recommendedName>
</protein>
<name>FLIE_SODGM</name>
<gene>
    <name evidence="1" type="primary">fliE</name>
    <name type="ordered locus">SG0054</name>
</gene>